<organismHost>
    <name type="scientific">Homo sapiens</name>
    <name type="common">Human</name>
    <dbReference type="NCBI Taxonomy" id="9606"/>
</organismHost>
<protein>
    <recommendedName>
        <fullName>Gag-Pol polyprotein</fullName>
    </recommendedName>
    <alternativeName>
        <fullName>Pr160Gag-Pol</fullName>
    </alternativeName>
    <component>
        <recommendedName>
            <fullName>Matrix protein p17</fullName>
            <shortName>MA</shortName>
        </recommendedName>
    </component>
    <component>
        <recommendedName>
            <fullName>Capsid protein p24</fullName>
            <shortName>CA</shortName>
        </recommendedName>
    </component>
    <component>
        <recommendedName>
            <fullName evidence="8">Spacer peptide 1</fullName>
            <shortName>SP1</shortName>
        </recommendedName>
        <alternativeName>
            <fullName>p2</fullName>
        </alternativeName>
    </component>
    <component>
        <recommendedName>
            <fullName>Nucleocapsid protein p7</fullName>
            <shortName>NC</shortName>
        </recommendedName>
    </component>
    <component>
        <recommendedName>
            <fullName>Transframe peptide</fullName>
            <shortName>TF</shortName>
        </recommendedName>
    </component>
    <component>
        <recommendedName>
            <fullName>p6-pol</fullName>
            <shortName>p6*</shortName>
        </recommendedName>
    </component>
    <component>
        <recommendedName>
            <fullName>Protease</fullName>
            <ecNumber>3.4.23.47</ecNumber>
        </recommendedName>
        <alternativeName>
            <fullName>PR</fullName>
        </alternativeName>
        <alternativeName>
            <fullName>Retropepsin</fullName>
        </alternativeName>
    </component>
    <component>
        <recommendedName>
            <fullName>Reverse transcriptase/ribonuclease H</fullName>
            <ecNumber>2.7.7.49</ecNumber>
            <ecNumber>2.7.7.7</ecNumber>
            <ecNumber>3.1.26.13</ecNumber>
        </recommendedName>
        <alternativeName>
            <fullName>Exoribonuclease H</fullName>
            <ecNumber>3.1.13.2</ecNumber>
        </alternativeName>
        <alternativeName>
            <fullName>p66 RT</fullName>
        </alternativeName>
    </component>
    <component>
        <recommendedName>
            <fullName>p51 RT</fullName>
        </recommendedName>
    </component>
    <component>
        <recommendedName>
            <fullName>p15</fullName>
        </recommendedName>
    </component>
    <component>
        <recommendedName>
            <fullName>Integrase</fullName>
            <shortName>IN</shortName>
            <ecNumber evidence="5">2.7.7.-</ecNumber>
            <ecNumber evidence="5">3.1.-.-</ecNumber>
        </recommendedName>
    </component>
</protein>
<gene>
    <name type="primary">gag-pol</name>
</gene>
<dbReference type="EC" id="3.4.23.47"/>
<dbReference type="EC" id="2.7.7.49"/>
<dbReference type="EC" id="2.7.7.7"/>
<dbReference type="EC" id="3.1.26.13"/>
<dbReference type="EC" id="3.1.13.2"/>
<dbReference type="EC" id="2.7.7.-" evidence="5"/>
<dbReference type="EC" id="3.1.-.-" evidence="5"/>
<dbReference type="EMBL" id="D00835">
    <property type="protein sequence ID" value="BAA00710.1"/>
    <property type="status" value="ALT_SEQ"/>
    <property type="molecule type" value="Genomic_DNA"/>
</dbReference>
<dbReference type="PIR" id="B38475">
    <property type="entry name" value="GNLJCA"/>
</dbReference>
<dbReference type="PIR" id="S53092">
    <property type="entry name" value="S53092"/>
</dbReference>
<dbReference type="SMR" id="P24107"/>
<dbReference type="MEROPS" id="A02.002"/>
<dbReference type="PRO" id="PR:P24107"/>
<dbReference type="Proteomes" id="UP000007421">
    <property type="component" value="Segment"/>
</dbReference>
<dbReference type="GO" id="GO:0043657">
    <property type="term" value="C:host cell"/>
    <property type="evidence" value="ECO:0007669"/>
    <property type="project" value="GOC"/>
</dbReference>
<dbReference type="GO" id="GO:0042025">
    <property type="term" value="C:host cell nucleus"/>
    <property type="evidence" value="ECO:0007669"/>
    <property type="project" value="UniProtKB-SubCell"/>
</dbReference>
<dbReference type="GO" id="GO:0020002">
    <property type="term" value="C:host cell plasma membrane"/>
    <property type="evidence" value="ECO:0007669"/>
    <property type="project" value="UniProtKB-SubCell"/>
</dbReference>
<dbReference type="GO" id="GO:0072494">
    <property type="term" value="C:host multivesicular body"/>
    <property type="evidence" value="ECO:0007669"/>
    <property type="project" value="UniProtKB-SubCell"/>
</dbReference>
<dbReference type="GO" id="GO:0016020">
    <property type="term" value="C:membrane"/>
    <property type="evidence" value="ECO:0007669"/>
    <property type="project" value="UniProtKB-KW"/>
</dbReference>
<dbReference type="GO" id="GO:0019013">
    <property type="term" value="C:viral nucleocapsid"/>
    <property type="evidence" value="ECO:0007669"/>
    <property type="project" value="UniProtKB-KW"/>
</dbReference>
<dbReference type="GO" id="GO:0055036">
    <property type="term" value="C:virion membrane"/>
    <property type="evidence" value="ECO:0007669"/>
    <property type="project" value="UniProtKB-SubCell"/>
</dbReference>
<dbReference type="GO" id="GO:0004190">
    <property type="term" value="F:aspartic-type endopeptidase activity"/>
    <property type="evidence" value="ECO:0007669"/>
    <property type="project" value="UniProtKB-KW"/>
</dbReference>
<dbReference type="GO" id="GO:0003677">
    <property type="term" value="F:DNA binding"/>
    <property type="evidence" value="ECO:0007669"/>
    <property type="project" value="UniProtKB-KW"/>
</dbReference>
<dbReference type="GO" id="GO:0003887">
    <property type="term" value="F:DNA-directed DNA polymerase activity"/>
    <property type="evidence" value="ECO:0007669"/>
    <property type="project" value="UniProtKB-KW"/>
</dbReference>
<dbReference type="GO" id="GO:0004533">
    <property type="term" value="F:exoribonuclease H activity"/>
    <property type="evidence" value="ECO:0007669"/>
    <property type="project" value="UniProtKB-EC"/>
</dbReference>
<dbReference type="GO" id="GO:0008289">
    <property type="term" value="F:lipid binding"/>
    <property type="evidence" value="ECO:0007669"/>
    <property type="project" value="UniProtKB-KW"/>
</dbReference>
<dbReference type="GO" id="GO:0035613">
    <property type="term" value="F:RNA stem-loop binding"/>
    <property type="evidence" value="ECO:0007669"/>
    <property type="project" value="TreeGrafter"/>
</dbReference>
<dbReference type="GO" id="GO:0003964">
    <property type="term" value="F:RNA-directed DNA polymerase activity"/>
    <property type="evidence" value="ECO:0007669"/>
    <property type="project" value="UniProtKB-KW"/>
</dbReference>
<dbReference type="GO" id="GO:0004523">
    <property type="term" value="F:RNA-DNA hybrid ribonuclease activity"/>
    <property type="evidence" value="ECO:0007669"/>
    <property type="project" value="InterPro"/>
</dbReference>
<dbReference type="GO" id="GO:0005198">
    <property type="term" value="F:structural molecule activity"/>
    <property type="evidence" value="ECO:0007669"/>
    <property type="project" value="InterPro"/>
</dbReference>
<dbReference type="GO" id="GO:0008270">
    <property type="term" value="F:zinc ion binding"/>
    <property type="evidence" value="ECO:0007669"/>
    <property type="project" value="UniProtKB-KW"/>
</dbReference>
<dbReference type="GO" id="GO:0015074">
    <property type="term" value="P:DNA integration"/>
    <property type="evidence" value="ECO:0007669"/>
    <property type="project" value="UniProtKB-KW"/>
</dbReference>
<dbReference type="GO" id="GO:0006310">
    <property type="term" value="P:DNA recombination"/>
    <property type="evidence" value="ECO:0007669"/>
    <property type="project" value="UniProtKB-KW"/>
</dbReference>
<dbReference type="GO" id="GO:0075713">
    <property type="term" value="P:establishment of integrated proviral latency"/>
    <property type="evidence" value="ECO:0007669"/>
    <property type="project" value="UniProtKB-KW"/>
</dbReference>
<dbReference type="GO" id="GO:0006508">
    <property type="term" value="P:proteolysis"/>
    <property type="evidence" value="ECO:0007669"/>
    <property type="project" value="UniProtKB-KW"/>
</dbReference>
<dbReference type="GO" id="GO:0046718">
    <property type="term" value="P:symbiont entry into host cell"/>
    <property type="evidence" value="ECO:0007669"/>
    <property type="project" value="UniProtKB-KW"/>
</dbReference>
<dbReference type="GO" id="GO:0039657">
    <property type="term" value="P:symbiont-mediated suppression of host gene expression"/>
    <property type="evidence" value="ECO:0007669"/>
    <property type="project" value="UniProtKB-KW"/>
</dbReference>
<dbReference type="GO" id="GO:0044826">
    <property type="term" value="P:viral genome integration into host DNA"/>
    <property type="evidence" value="ECO:0007669"/>
    <property type="project" value="UniProtKB-KW"/>
</dbReference>
<dbReference type="GO" id="GO:0075732">
    <property type="term" value="P:viral penetration into host nucleus"/>
    <property type="evidence" value="ECO:0007669"/>
    <property type="project" value="UniProtKB-KW"/>
</dbReference>
<dbReference type="GO" id="GO:0075523">
    <property type="term" value="P:viral translational frameshifting"/>
    <property type="evidence" value="ECO:0007669"/>
    <property type="project" value="UniProtKB-KW"/>
</dbReference>
<dbReference type="CDD" id="cd05482">
    <property type="entry name" value="HIV_retropepsin_like"/>
    <property type="match status" value="1"/>
</dbReference>
<dbReference type="Gene3D" id="1.10.10.200">
    <property type="match status" value="1"/>
</dbReference>
<dbReference type="Gene3D" id="1.10.1200.30">
    <property type="match status" value="1"/>
</dbReference>
<dbReference type="Gene3D" id="3.30.70.270">
    <property type="match status" value="3"/>
</dbReference>
<dbReference type="Gene3D" id="2.40.70.10">
    <property type="entry name" value="Acid Proteases"/>
    <property type="match status" value="1"/>
</dbReference>
<dbReference type="Gene3D" id="3.10.10.10">
    <property type="entry name" value="HIV Type 1 Reverse Transcriptase, subunit A, domain 1"/>
    <property type="match status" value="1"/>
</dbReference>
<dbReference type="Gene3D" id="1.10.375.10">
    <property type="entry name" value="Human Immunodeficiency Virus Type 1 Capsid Protein"/>
    <property type="match status" value="1"/>
</dbReference>
<dbReference type="Gene3D" id="1.10.150.90">
    <property type="entry name" value="Immunodeficiency lentiviruses, gag gene matrix protein p17"/>
    <property type="match status" value="1"/>
</dbReference>
<dbReference type="Gene3D" id="2.30.30.10">
    <property type="entry name" value="Integrase, C-terminal domain superfamily, retroviral"/>
    <property type="match status" value="1"/>
</dbReference>
<dbReference type="Gene3D" id="3.30.420.10">
    <property type="entry name" value="Ribonuclease H-like superfamily/Ribonuclease H"/>
    <property type="match status" value="2"/>
</dbReference>
<dbReference type="Gene3D" id="1.20.5.760">
    <property type="entry name" value="Single helix bin"/>
    <property type="match status" value="1"/>
</dbReference>
<dbReference type="Gene3D" id="4.10.60.10">
    <property type="entry name" value="Zinc finger, CCHC-type"/>
    <property type="match status" value="1"/>
</dbReference>
<dbReference type="InterPro" id="IPR001969">
    <property type="entry name" value="Aspartic_peptidase_AS"/>
</dbReference>
<dbReference type="InterPro" id="IPR043502">
    <property type="entry name" value="DNA/RNA_pol_sf"/>
</dbReference>
<dbReference type="InterPro" id="IPR045345">
    <property type="entry name" value="Gag_p24_C"/>
</dbReference>
<dbReference type="InterPro" id="IPR017856">
    <property type="entry name" value="Integrase-like_N"/>
</dbReference>
<dbReference type="InterPro" id="IPR036862">
    <property type="entry name" value="Integrase_C_dom_sf_retrovir"/>
</dbReference>
<dbReference type="InterPro" id="IPR001037">
    <property type="entry name" value="Integrase_C_retrovir"/>
</dbReference>
<dbReference type="InterPro" id="IPR001584">
    <property type="entry name" value="Integrase_cat-core"/>
</dbReference>
<dbReference type="InterPro" id="IPR003308">
    <property type="entry name" value="Integrase_Zn-bd_dom_N"/>
</dbReference>
<dbReference type="InterPro" id="IPR000071">
    <property type="entry name" value="Lentvrl_matrix_N"/>
</dbReference>
<dbReference type="InterPro" id="IPR012344">
    <property type="entry name" value="Matrix_HIV/RSV_N"/>
</dbReference>
<dbReference type="InterPro" id="IPR001995">
    <property type="entry name" value="Peptidase_A2_cat"/>
</dbReference>
<dbReference type="InterPro" id="IPR021109">
    <property type="entry name" value="Peptidase_aspartic_dom_sf"/>
</dbReference>
<dbReference type="InterPro" id="IPR034170">
    <property type="entry name" value="Retropepsin-like_cat_dom"/>
</dbReference>
<dbReference type="InterPro" id="IPR018061">
    <property type="entry name" value="Retropepsins"/>
</dbReference>
<dbReference type="InterPro" id="IPR008916">
    <property type="entry name" value="Retrov_capsid_C"/>
</dbReference>
<dbReference type="InterPro" id="IPR008919">
    <property type="entry name" value="Retrov_capsid_N"/>
</dbReference>
<dbReference type="InterPro" id="IPR010999">
    <property type="entry name" value="Retrovr_matrix"/>
</dbReference>
<dbReference type="InterPro" id="IPR043128">
    <property type="entry name" value="Rev_trsase/Diguanyl_cyclase"/>
</dbReference>
<dbReference type="InterPro" id="IPR012337">
    <property type="entry name" value="RNaseH-like_sf"/>
</dbReference>
<dbReference type="InterPro" id="IPR002156">
    <property type="entry name" value="RNaseH_domain"/>
</dbReference>
<dbReference type="InterPro" id="IPR036397">
    <property type="entry name" value="RNaseH_sf"/>
</dbReference>
<dbReference type="InterPro" id="IPR000477">
    <property type="entry name" value="RT_dom"/>
</dbReference>
<dbReference type="InterPro" id="IPR010659">
    <property type="entry name" value="RVT_connect"/>
</dbReference>
<dbReference type="InterPro" id="IPR010661">
    <property type="entry name" value="RVT_thumb"/>
</dbReference>
<dbReference type="InterPro" id="IPR001878">
    <property type="entry name" value="Znf_CCHC"/>
</dbReference>
<dbReference type="InterPro" id="IPR036875">
    <property type="entry name" value="Znf_CCHC_sf"/>
</dbReference>
<dbReference type="PANTHER" id="PTHR41694">
    <property type="entry name" value="ENDOGENOUS RETROVIRUS GROUP K MEMBER POL PROTEIN"/>
    <property type="match status" value="1"/>
</dbReference>
<dbReference type="PANTHER" id="PTHR41694:SF3">
    <property type="entry name" value="RNA-DIRECTED DNA POLYMERASE-RELATED"/>
    <property type="match status" value="1"/>
</dbReference>
<dbReference type="Pfam" id="PF00540">
    <property type="entry name" value="Gag_p17"/>
    <property type="match status" value="1"/>
</dbReference>
<dbReference type="Pfam" id="PF00607">
    <property type="entry name" value="Gag_p24"/>
    <property type="match status" value="1"/>
</dbReference>
<dbReference type="Pfam" id="PF19317">
    <property type="entry name" value="Gag_p24_C"/>
    <property type="match status" value="1"/>
</dbReference>
<dbReference type="Pfam" id="PF00552">
    <property type="entry name" value="IN_DBD_C"/>
    <property type="match status" value="1"/>
</dbReference>
<dbReference type="Pfam" id="PF02022">
    <property type="entry name" value="Integrase_Zn"/>
    <property type="match status" value="1"/>
</dbReference>
<dbReference type="Pfam" id="PF00075">
    <property type="entry name" value="RNase_H"/>
    <property type="match status" value="1"/>
</dbReference>
<dbReference type="Pfam" id="PF00665">
    <property type="entry name" value="rve"/>
    <property type="match status" value="1"/>
</dbReference>
<dbReference type="Pfam" id="PF00077">
    <property type="entry name" value="RVP"/>
    <property type="match status" value="1"/>
</dbReference>
<dbReference type="Pfam" id="PF00078">
    <property type="entry name" value="RVT_1"/>
    <property type="match status" value="1"/>
</dbReference>
<dbReference type="Pfam" id="PF06815">
    <property type="entry name" value="RVT_connect"/>
    <property type="match status" value="1"/>
</dbReference>
<dbReference type="Pfam" id="PF06817">
    <property type="entry name" value="RVT_thumb"/>
    <property type="match status" value="1"/>
</dbReference>
<dbReference type="Pfam" id="PF00098">
    <property type="entry name" value="zf-CCHC"/>
    <property type="match status" value="2"/>
</dbReference>
<dbReference type="PRINTS" id="PR00234">
    <property type="entry name" value="HIV1MATRIX"/>
</dbReference>
<dbReference type="SMART" id="SM00343">
    <property type="entry name" value="ZnF_C2HC"/>
    <property type="match status" value="2"/>
</dbReference>
<dbReference type="SUPFAM" id="SSF50630">
    <property type="entry name" value="Acid proteases"/>
    <property type="match status" value="1"/>
</dbReference>
<dbReference type="SUPFAM" id="SSF50122">
    <property type="entry name" value="DNA-binding domain of retroviral integrase"/>
    <property type="match status" value="1"/>
</dbReference>
<dbReference type="SUPFAM" id="SSF56672">
    <property type="entry name" value="DNA/RNA polymerases"/>
    <property type="match status" value="1"/>
</dbReference>
<dbReference type="SUPFAM" id="SSF46919">
    <property type="entry name" value="N-terminal Zn binding domain of HIV integrase"/>
    <property type="match status" value="1"/>
</dbReference>
<dbReference type="SUPFAM" id="SSF47836">
    <property type="entry name" value="Retroviral matrix proteins"/>
    <property type="match status" value="1"/>
</dbReference>
<dbReference type="SUPFAM" id="SSF47353">
    <property type="entry name" value="Retrovirus capsid dimerization domain-like"/>
    <property type="match status" value="1"/>
</dbReference>
<dbReference type="SUPFAM" id="SSF47943">
    <property type="entry name" value="Retrovirus capsid protein, N-terminal core domain"/>
    <property type="match status" value="1"/>
</dbReference>
<dbReference type="SUPFAM" id="SSF57756">
    <property type="entry name" value="Retrovirus zinc finger-like domains"/>
    <property type="match status" value="1"/>
</dbReference>
<dbReference type="SUPFAM" id="SSF53098">
    <property type="entry name" value="Ribonuclease H-like"/>
    <property type="match status" value="2"/>
</dbReference>
<dbReference type="PROSITE" id="PS50175">
    <property type="entry name" value="ASP_PROT_RETROV"/>
    <property type="match status" value="1"/>
</dbReference>
<dbReference type="PROSITE" id="PS00141">
    <property type="entry name" value="ASP_PROTEASE"/>
    <property type="match status" value="1"/>
</dbReference>
<dbReference type="PROSITE" id="PS50994">
    <property type="entry name" value="INTEGRASE"/>
    <property type="match status" value="1"/>
</dbReference>
<dbReference type="PROSITE" id="PS51027">
    <property type="entry name" value="INTEGRASE_DBD"/>
    <property type="match status" value="1"/>
</dbReference>
<dbReference type="PROSITE" id="PS50879">
    <property type="entry name" value="RNASE_H_1"/>
    <property type="match status" value="1"/>
</dbReference>
<dbReference type="PROSITE" id="PS50878">
    <property type="entry name" value="RT_POL"/>
    <property type="match status" value="1"/>
</dbReference>
<dbReference type="PROSITE" id="PS50158">
    <property type="entry name" value="ZF_CCHC"/>
    <property type="match status" value="2"/>
</dbReference>
<dbReference type="PROSITE" id="PS50876">
    <property type="entry name" value="ZF_INTEGRASE"/>
    <property type="match status" value="1"/>
</dbReference>
<keyword id="KW-0014">AIDS</keyword>
<keyword id="KW-0064">Aspartyl protease</keyword>
<keyword id="KW-0167">Capsid protein</keyword>
<keyword id="KW-0229">DNA integration</keyword>
<keyword id="KW-0233">DNA recombination</keyword>
<keyword id="KW-0238">DNA-binding</keyword>
<keyword id="KW-0239">DNA-directed DNA polymerase</keyword>
<keyword id="KW-0255">Endonuclease</keyword>
<keyword id="KW-1262">Eukaryotic host gene expression shutoff by virus</keyword>
<keyword id="KW-1193">Eukaryotic host translation shutoff by virus</keyword>
<keyword id="KW-1032">Host cell membrane</keyword>
<keyword id="KW-1035">Host cytoplasm</keyword>
<keyword id="KW-1039">Host endosome</keyword>
<keyword id="KW-1190">Host gene expression shutoff by virus</keyword>
<keyword id="KW-1043">Host membrane</keyword>
<keyword id="KW-1048">Host nucleus</keyword>
<keyword id="KW-0945">Host-virus interaction</keyword>
<keyword id="KW-0378">Hydrolase</keyword>
<keyword id="KW-0446">Lipid-binding</keyword>
<keyword id="KW-0449">Lipoprotein</keyword>
<keyword id="KW-0460">Magnesium</keyword>
<keyword id="KW-0472">Membrane</keyword>
<keyword id="KW-0479">Metal-binding</keyword>
<keyword id="KW-0511">Multifunctional enzyme</keyword>
<keyword id="KW-0519">Myristate</keyword>
<keyword id="KW-0540">Nuclease</keyword>
<keyword id="KW-0548">Nucleotidyltransferase</keyword>
<keyword id="KW-0597">Phosphoprotein</keyword>
<keyword id="KW-0645">Protease</keyword>
<keyword id="KW-0677">Repeat</keyword>
<keyword id="KW-0688">Ribosomal frameshifting</keyword>
<keyword id="KW-0694">RNA-binding</keyword>
<keyword id="KW-0695">RNA-directed DNA polymerase</keyword>
<keyword id="KW-0808">Transferase</keyword>
<keyword id="KW-1179">Viral genome integration</keyword>
<keyword id="KW-0543">Viral nucleoprotein</keyword>
<keyword id="KW-1163">Viral penetration into host nucleus</keyword>
<keyword id="KW-1188">Viral release from host cell</keyword>
<keyword id="KW-0946">Virion</keyword>
<keyword id="KW-0917">Virion maturation</keyword>
<keyword id="KW-1160">Virus entry into host cell</keyword>
<keyword id="KW-0862">Zinc</keyword>
<keyword id="KW-0863">Zinc-finger</keyword>
<name>POL_HV2CA</name>
<organism>
    <name type="scientific">Human immunodeficiency virus type 2 subtype A (isolate CAM2)</name>
    <name type="common">HIV-2</name>
    <dbReference type="NCBI Taxonomy" id="11715"/>
    <lineage>
        <taxon>Viruses</taxon>
        <taxon>Riboviria</taxon>
        <taxon>Pararnavirae</taxon>
        <taxon>Artverviricota</taxon>
        <taxon>Revtraviricetes</taxon>
        <taxon>Ortervirales</taxon>
        <taxon>Retroviridae</taxon>
        <taxon>Orthoretrovirinae</taxon>
        <taxon>Lentivirus</taxon>
        <taxon>Human immunodeficiency virus 2</taxon>
    </lineage>
</organism>
<sequence>MGARNSVLRGKKADELEKVRLRPGGKKKYKLKHIVWAANELDRFGLAESLLESKEGCQRILKVLDPLVPTGSENLKSLFNTVCVIWCIHAEEKVKDTEEAKRIALRHLAAETGTAEKMPDTSRPTAPPSGKGGNYPVQSIGGNYTHVPLSPRTLNAWVKLVEEKKFGAEVVPGFQALSEGCTPYDINQMLNCVGDHQAAMQIIREIINEEAADWDANHPIPGPLPAGQLRDPRGSDIAGTTSTVEEQIQWMFRAQNPVPVGNIYRRWIQIGLQKCVRMYNPTNILDIKQGPKESFQSYVDRFYKSLRAEQTDPAVKNWMTQTLLVQNANPDCKLVLKGLGMNPTLEEMLTACQGVGGPGQKARLMAEALKEAMGPPPIPFAAAQQRRTIKCWNCGKEGHSARQCRAPRRQGCWKCGKPGHIMTNCPDRQAGFLRDWPLGKEAPQFPRGPSSTGANTNSTPIGSSSGSTGEIYAAREKAEGAETETIQRGDRGLTAPRTRRGPMQGDNRGLAAPQFSLWKRPVVTAHIEGQPVEVLLDTGADDSIVAGIELGSNYSPKIVGGIGGFINTKEYKNVEIEVLGKRVRATIMTGDTPINIFGRNILTALGMSLNLPVAKIEPIKIMLKPGKDGPRLRQWPLTKEKIEALKEICEKMEKEGQLEEAPPTNPYNTPTFAIRKKDKNKWRMLIDFRELNKVTQDFTEIQLGIPHPAGLAKKRRITVLDVGDAYFSIPLHEDFRQYTAFTLPSVNNAEPGKRYIYKVLPQGWKGSPAIFQYTMRQVLEPFRKANSDVIIIQYMDDILIASDRTDLEHDKVVLQLKELLNNLGFSTPDEKFQKDPPYRWMGYELWPTKWKLQKIQLPQKEVWTVNDIQKLVGVLNWAAQIYPGIKTKHLCRLIRGKMTLTEEVQWTELAEAELEENRIILSQEQEGHYYQEEKELEATVQKDQDNQWTYKIHQEEKILKVGKYAKIKHTHTNGVKLLAQVVQKIGKEALVIGRIPKFHLPVEREVWEQWWDNYWQVTWIPDWDFVSTPPLVRLAFNLVGDPIPGTETFYTDGSCNRQSKEGKAGYVTDRGRDKVKILEQTTNQQAELEAFAMALTDSGPKANIIVDSQYVMGIVAGQPTESENRIVNQIIEEMIKKEAIYVAWVPAHKGIGGNQEVDHLVSQGIRQVLFLEKIEPAQEEHEKYHTNVKELCHKFDIPQLVARQIVNTCAQYQQKGEAIHGQVNAEVGTWQMDCTHLEGKIIIVAVHVASGFIEAEVIPQESGRQTALFLLKLASRWPITHLHTDNGANFTSQEVKMVAWWVGIEQTFGVPYNPQSQGVVEAMNHHLKNQISRIREQANTVETIVLMAVHCMNFKRRGGIGDMTPSERLINMITTEQEIQFLQAKNSKLKNFRVYFREGRDQLWKGPGELLWKGDGAVIVKVGTDIKIIPRRKAKIIRDYGGRQELDSSSHLEGARENGEVA</sequence>
<feature type="initiator methionine" description="Removed; by host" evidence="1">
    <location>
        <position position="1"/>
    </location>
</feature>
<feature type="chain" id="PRO_0000261291" description="Gag-Pol polyprotein">
    <location>
        <begin position="2"/>
        <end position="1462"/>
    </location>
</feature>
<feature type="chain" id="PRO_0000042471" description="Matrix protein p17" evidence="1">
    <location>
        <begin position="2"/>
        <end position="135"/>
    </location>
</feature>
<feature type="chain" id="PRO_0000042472" description="Capsid protein p24" evidence="1">
    <location>
        <begin position="136"/>
        <end position="365"/>
    </location>
</feature>
<feature type="peptide" id="PRO_0000042473" description="Spacer peptide 1" evidence="1">
    <location>
        <begin position="366"/>
        <end position="382"/>
    </location>
</feature>
<feature type="chain" id="PRO_0000042475" description="Nucleocapsid protein p7" evidence="1">
    <location>
        <begin position="383"/>
        <end position="431"/>
    </location>
</feature>
<feature type="peptide" id="PRO_0000246740" description="Transframe peptide" evidence="9">
    <location>
        <begin position="432"/>
        <end position="445"/>
    </location>
</feature>
<feature type="chain" id="PRO_0000042477" description="p6-pol" evidence="9">
    <location>
        <begin position="446"/>
        <end position="512"/>
    </location>
</feature>
<feature type="chain" id="PRO_0000038668" description="Protease" evidence="1">
    <location>
        <begin position="513"/>
        <end position="611"/>
    </location>
</feature>
<feature type="chain" id="PRO_0000042478" description="Reverse transcriptase/ribonuclease H" evidence="1">
    <location>
        <begin position="612"/>
        <end position="1169"/>
    </location>
</feature>
<feature type="chain" id="PRO_0000042479" description="p51 RT" evidence="1">
    <location>
        <begin position="612"/>
        <end position="1049"/>
    </location>
</feature>
<feature type="chain" id="PRO_0000042480" description="p15" evidence="1">
    <location>
        <begin position="1050"/>
        <end position="1169"/>
    </location>
</feature>
<feature type="chain" id="PRO_0000042481" description="Integrase" evidence="1">
    <location>
        <begin position="1170"/>
        <end position="1462"/>
    </location>
</feature>
<feature type="domain" description="Peptidase A2" evidence="11">
    <location>
        <begin position="532"/>
        <end position="601"/>
    </location>
</feature>
<feature type="domain" description="Reverse transcriptase" evidence="12">
    <location>
        <begin position="655"/>
        <end position="845"/>
    </location>
</feature>
<feature type="domain" description="RNase H type-1" evidence="13">
    <location>
        <begin position="1043"/>
        <end position="1166"/>
    </location>
</feature>
<feature type="domain" description="Integrase catalytic" evidence="15">
    <location>
        <begin position="1222"/>
        <end position="1373"/>
    </location>
</feature>
<feature type="zinc finger region" description="CCHC-type 1" evidence="10">
    <location>
        <begin position="389"/>
        <end position="406"/>
    </location>
</feature>
<feature type="zinc finger region" description="CCHC-type 2" evidence="10">
    <location>
        <begin position="410"/>
        <end position="427"/>
    </location>
</feature>
<feature type="zinc finger region" description="Integrase-type; degenerate" evidence="14">
    <location>
        <begin position="1172"/>
        <end position="1213"/>
    </location>
</feature>
<feature type="DNA-binding region" description="Integrase-type" evidence="16">
    <location>
        <begin position="1392"/>
        <end position="1439"/>
    </location>
</feature>
<feature type="region of interest" description="Interaction with Gp41" evidence="8">
    <location>
        <begin position="7"/>
        <end position="31"/>
    </location>
</feature>
<feature type="region of interest" description="Disordered" evidence="18">
    <location>
        <begin position="111"/>
        <end position="136"/>
    </location>
</feature>
<feature type="region of interest" description="Interaction with human PPIA/CYPA and NUP153" evidence="8">
    <location>
        <begin position="191"/>
        <end position="228"/>
    </location>
</feature>
<feature type="region of interest" description="Dimerization/Multimerization of capsid protein p24" evidence="5">
    <location>
        <begin position="279"/>
        <end position="365"/>
    </location>
</feature>
<feature type="region of interest" description="Disordered" evidence="18">
    <location>
        <begin position="439"/>
        <end position="510"/>
    </location>
</feature>
<feature type="region of interest" description="Dimerization of protease" evidence="5">
    <location>
        <begin position="513"/>
        <end position="517"/>
    </location>
</feature>
<feature type="region of interest" description="Dimerization of protease" evidence="5">
    <location>
        <begin position="561"/>
        <end position="567"/>
    </location>
</feature>
<feature type="region of interest" description="Dimerization of protease" evidence="5">
    <location>
        <begin position="600"/>
        <end position="612"/>
    </location>
</feature>
<feature type="region of interest" description="RT 'primer grip'" evidence="1">
    <location>
        <begin position="838"/>
        <end position="846"/>
    </location>
</feature>
<feature type="short sequence motif" description="Nuclear export signal" evidence="1">
    <location>
        <begin position="16"/>
        <end position="22"/>
    </location>
</feature>
<feature type="short sequence motif" description="Nuclear localization signal" evidence="1">
    <location>
        <begin position="26"/>
        <end position="32"/>
    </location>
</feature>
<feature type="short sequence motif" description="Tryptophan repeat motif" evidence="1">
    <location>
        <begin position="1007"/>
        <end position="1023"/>
    </location>
</feature>
<feature type="compositionally biased region" description="Low complexity" evidence="18">
    <location>
        <begin position="456"/>
        <end position="469"/>
    </location>
</feature>
<feature type="compositionally biased region" description="Basic and acidic residues" evidence="18">
    <location>
        <begin position="473"/>
        <end position="491"/>
    </location>
</feature>
<feature type="active site" description="For protease activity; shared with dimeric partner" evidence="17">
    <location>
        <position position="537"/>
    </location>
</feature>
<feature type="binding site" evidence="1">
    <location>
        <position position="721"/>
    </location>
    <ligand>
        <name>Mg(2+)</name>
        <dbReference type="ChEBI" id="CHEBI:18420"/>
        <label>1</label>
        <note>catalytic; for reverse transcriptase activity</note>
    </ligand>
</feature>
<feature type="binding site" evidence="1">
    <location>
        <position position="796"/>
    </location>
    <ligand>
        <name>Mg(2+)</name>
        <dbReference type="ChEBI" id="CHEBI:18420"/>
        <label>1</label>
        <note>catalytic; for reverse transcriptase activity</note>
    </ligand>
</feature>
<feature type="binding site" evidence="1">
    <location>
        <position position="797"/>
    </location>
    <ligand>
        <name>Mg(2+)</name>
        <dbReference type="ChEBI" id="CHEBI:18420"/>
        <label>1</label>
        <note>catalytic; for reverse transcriptase activity</note>
    </ligand>
</feature>
<feature type="binding site" evidence="1">
    <location>
        <position position="1052"/>
    </location>
    <ligand>
        <name>Mg(2+)</name>
        <dbReference type="ChEBI" id="CHEBI:18420"/>
        <label>2</label>
        <note>catalytic; for RNase H activity</note>
    </ligand>
</feature>
<feature type="binding site" evidence="1">
    <location>
        <position position="1087"/>
    </location>
    <ligand>
        <name>Mg(2+)</name>
        <dbReference type="ChEBI" id="CHEBI:18420"/>
        <label>2</label>
        <note>catalytic; for RNase H activity</note>
    </ligand>
</feature>
<feature type="binding site" evidence="1">
    <location>
        <position position="1107"/>
    </location>
    <ligand>
        <name>Mg(2+)</name>
        <dbReference type="ChEBI" id="CHEBI:18420"/>
        <label>2</label>
        <note>catalytic; for RNase H activity</note>
    </ligand>
</feature>
<feature type="binding site" evidence="1">
    <location>
        <position position="1158"/>
    </location>
    <ligand>
        <name>Mg(2+)</name>
        <dbReference type="ChEBI" id="CHEBI:18420"/>
        <label>2</label>
        <note>catalytic; for RNase H activity</note>
    </ligand>
</feature>
<feature type="binding site" evidence="1">
    <location>
        <position position="1233"/>
    </location>
    <ligand>
        <name>Mg(2+)</name>
        <dbReference type="ChEBI" id="CHEBI:18420"/>
        <label>3</label>
        <note>catalytic; for integrase activity</note>
    </ligand>
</feature>
<feature type="binding site" evidence="1">
    <location>
        <position position="1285"/>
    </location>
    <ligand>
        <name>Mg(2+)</name>
        <dbReference type="ChEBI" id="CHEBI:18420"/>
        <label>3</label>
        <note>catalytic; for integrase activity</note>
    </ligand>
</feature>
<feature type="binding site" evidence="5">
    <location>
        <position position="1321"/>
    </location>
    <ligand>
        <name>Mg(2+)</name>
        <dbReference type="ChEBI" id="CHEBI:18420"/>
        <label>3</label>
        <note>catalytic; for integrase activity</note>
    </ligand>
</feature>
<feature type="site" description="Cleavage; by viral protease" evidence="1">
    <location>
        <begin position="135"/>
        <end position="136"/>
    </location>
</feature>
<feature type="site" description="Cis/trans isomerization of proline peptide bond; by human PPIA/CYPA" evidence="1">
    <location>
        <begin position="222"/>
        <end position="223"/>
    </location>
</feature>
<feature type="site" description="Cleavage; by viral protease" evidence="1">
    <location>
        <begin position="365"/>
        <end position="366"/>
    </location>
</feature>
<feature type="site" description="Cleavage; by viral protease" evidence="1">
    <location>
        <begin position="382"/>
        <end position="383"/>
    </location>
</feature>
<feature type="site" description="Cleavage; by viral protease" evidence="9">
    <location>
        <begin position="431"/>
        <end position="432"/>
    </location>
</feature>
<feature type="site" description="Cleavage; by viral protease" evidence="1">
    <location>
        <begin position="445"/>
        <end position="446"/>
    </location>
</feature>
<feature type="site" description="Cleavage; by viral protease" evidence="1">
    <location>
        <begin position="512"/>
        <end position="513"/>
    </location>
</feature>
<feature type="site" description="Cleavage; by viral protease" evidence="1">
    <location>
        <begin position="611"/>
        <end position="612"/>
    </location>
</feature>
<feature type="site" description="Essential for RT p66/p51 heterodimerization" evidence="1">
    <location>
        <position position="1010"/>
    </location>
</feature>
<feature type="site" description="Essential for RT p66/p51 heterodimerization" evidence="1">
    <location>
        <position position="1023"/>
    </location>
</feature>
<feature type="site" description="Cleavage; by viral protease; partial" evidence="1">
    <location>
        <begin position="1049"/>
        <end position="1050"/>
    </location>
</feature>
<feature type="site" description="Cleavage; by viral protease" evidence="1">
    <location>
        <begin position="1169"/>
        <end position="1170"/>
    </location>
</feature>
<feature type="modified residue" description="Phosphotyrosine; by host" evidence="1">
    <location>
        <position position="135"/>
    </location>
</feature>
<feature type="lipid moiety-binding region" description="N-myristoyl glycine; by host" evidence="1">
    <location>
        <position position="2"/>
    </location>
</feature>
<proteinExistence type="inferred from homology"/>
<comment type="function">
    <molecule>Gag-Pol polyprotein</molecule>
    <text evidence="1">Mediates, with Gag polyprotein, the essential events in virion assembly, including binding the plasma membrane, making the protein-protein interactions necessary to create spherical particles, recruiting the viral Env proteins, and packaging the genomic RNA via direct interactions with the RNA packaging sequence (Psi). Gag-Pol polyprotein may regulate its own translation, by the binding genomic RNA in the 5'-UTR. At low concentration, the polyprotein would promote translation, whereas at high concentration, the polyprotein would encapsidate genomic RNA and then shut off translation.</text>
</comment>
<comment type="function">
    <molecule>Matrix protein p17</molecule>
    <text evidence="8">Targets the polyprotein to the plasma membrane via a multipartite membrane-binding signal, that includes its myristoylated N-terminus. Matrix protein is part of the pre-integration complex. Implicated in the release from host cell mediated by Vpu. Binds to RNA.</text>
</comment>
<comment type="function">
    <molecule>Capsid protein p24</molecule>
    <text evidence="5 8">Forms the conical core that encapsulates the genomic RNA-nucleocapsid complex in the virion. Most core are conical, with only 7% tubular. The core is constituted by capsid protein hexamer subunits. The core is disassembled soon after virion entry (By similarity). Host restriction factors such as TRIM5-alpha or TRIMCyp bind retroviral capsids and cause premature capsid disassembly, leading to blocks in reverse transcription. Capsid restriction by TRIM5 is one of the factors which restricts HIV-1 to the human species. Host PIN1 apparently facilitates the virion uncoating. On the other hand, interactions with PDZD8 or CYPA stabilize the capsid.</text>
</comment>
<comment type="function">
    <molecule>Nucleocapsid protein p7</molecule>
    <text evidence="5">Encapsulates and protects viral dimeric unspliced genomic RNA (gRNA). Binds these RNAs through its zinc fingers. Acts as a nucleic acid chaperone which is involved in rearangement of nucleic acid secondary structure during gRNA retrotranscription. Also facilitates template switch leading to recombination. As part of the polyprotein, participates in gRNA dimerization, packaging, tRNA incorporation and virion assembly.</text>
</comment>
<comment type="function">
    <molecule>Protease</molecule>
    <text evidence="5 11">Aspartyl protease that mediates proteolytic cleavages of Gag and Gag-Pol polyproteins during or shortly after the release of the virion from the plasma membrane. Cleavages take place as an ordered, step-wise cascade to yield mature proteins. This process is called maturation. Displays maximal activity during the budding process just prior to particle release from the cell. Also cleaves Nef and Vif, probably concomitantly with viral structural proteins on maturation of virus particles. Hydrolyzes host EIF4GI and PABP1 in order to shut off the capped cellular mRNA translation. The resulting inhibition of cellular protein synthesis serves to ensure maximal viral gene expression and to evade host immune response (By similarity).</text>
</comment>
<comment type="function">
    <molecule>Reverse transcriptase/ribonuclease H</molecule>
    <text evidence="5">Multifunctional enzyme that converts the viral RNA genome into dsDNA in the cytoplasm, shortly after virus entry into the cell. This enzyme displays a DNA polymerase activity that can copy either DNA or RNA templates, and a ribonuclease H (RNase H) activity that cleaves the RNA strand of RNA-DNA heteroduplexes in a partially processive 3' to 5' endonucleasic mode. Conversion of viral genomic RNA into dsDNA requires many steps. A tRNA(3)-Lys binds to the primer-binding site (PBS) situated at the 5'-end of the viral RNA. RT uses the 3' end of the tRNA primer to perform a short round of RNA-dependent minus-strand DNA synthesis. The reading proceeds through the U5 region and ends after the repeated (R) region which is present at both ends of viral RNA. The portion of the RNA-DNA heteroduplex is digested by the RNase H, resulting in a ssDNA product attached to the tRNA primer. This ssDNA/tRNA hybridizes with the identical R region situated at the 3' end of viral RNA. This template exchange, known as minus-strand DNA strong stop transfer, can be either intra- or intermolecular. RT uses the 3' end of this newly synthesized short ssDNA to perform the RNA-dependent minus-strand DNA synthesis of the whole template. RNase H digests the RNA template except for two polypurine tracts (PPTs) situated at the 5'-end and near the center of the genome. It is not clear if both polymerase and RNase H activities are simultaneous. RNase H probably can proceed both in a polymerase-dependent (RNA cut into small fragments by the same RT performing DNA synthesis) and a polymerase-independent mode (cleavage of remaining RNA fragments by free RTs). Secondly, RT performs DNA-directed plus-strand DNA synthesis using the PPTs that have not been removed by RNase H as primers. PPTs and tRNA primers are then removed by RNase H. The 3' and 5' ssDNA PBS regions hybridize to form a circular dsDNA intermediate. Strand displacement synthesis by RT to the PBS and PPT ends produces a blunt ended, linear dsDNA copy of the viral genome that includes long terminal repeats (LTRs) at both ends.</text>
</comment>
<comment type="function">
    <molecule>Integrase</molecule>
    <text evidence="5">Catalyzes viral DNA integration into the host chromosome, by performing a series of DNA cutting and joining reactions. This enzyme activity takes place after virion entry into a cell and reverse transcription of the RNA genome in dsDNA. The first step in the integration process is 3' processing. This step requires a complex comprising the viral genome, matrix protein, Vpr and integrase. This complex is called the pre-integration complex (PIC). The integrase protein removes 2 nucleotides from each 3' end of the viral DNA, leaving recessed CA OH's at the 3' ends. In the second step, the PIC enters cell nucleus. This process is mediated through integrase and Vpr proteins, and allows the virus to infect a non dividing cell. This ability to enter the nucleus is specific of lentiviruses, other retroviruses cannot and rely on cell division to access cell chromosomes. In the third step, termed strand transfer, the integrase protein joins the previously processed 3' ends to the 5' ends of strands of target cellular DNA at the site of integration. The 5'-ends are produced by integrase-catalyzed staggered cuts, 5 bp apart. A Y-shaped, gapped, recombination intermediate results, with the 5'-ends of the viral DNA strands and the 3' ends of target DNA strands remaining unjoined, flanking a gap of 5 bp. The last step is viral DNA integration into host chromosome. This involves host DNA repair synthesis in which the 5 bp gaps between the unjoined strands are filled in and then ligated. Since this process occurs at both cuts flanking the HIV genome, a 5 bp duplication of host DNA is produced at the ends of HIV-1 integration. Alternatively, Integrase may catalyze the excision of viral DNA just after strand transfer, this is termed disintegration.</text>
</comment>
<comment type="catalytic activity">
    <reaction evidence="11">
        <text>Endopeptidase for which the P1 residue is preferably hydrophobic.</text>
        <dbReference type="EC" id="3.4.23.47"/>
    </reaction>
</comment>
<comment type="catalytic activity">
    <reaction evidence="1">
        <text>Endohydrolysis of RNA in RNA/DNA hybrids. Three different cleavage modes: 1. sequence-specific internal cleavage of RNA. Human immunodeficiency virus type 1 and Moloney murine leukemia virus enzymes prefer to cleave the RNA strand one nucleotide away from the RNA-DNA junction. 2. RNA 5'-end directed cleavage 13-19 nucleotides from the RNA end. 3. DNA 3'-end directed cleavage 15-20 nucleotides away from the primer terminus.</text>
        <dbReference type="EC" id="3.1.26.13"/>
    </reaction>
</comment>
<comment type="catalytic activity">
    <reaction evidence="1">
        <text>3'-end directed exonucleolytic cleavage of viral RNA-DNA hybrid.</text>
        <dbReference type="EC" id="3.1.13.2"/>
    </reaction>
</comment>
<comment type="catalytic activity">
    <reaction evidence="12">
        <text>DNA(n) + a 2'-deoxyribonucleoside 5'-triphosphate = DNA(n+1) + diphosphate</text>
        <dbReference type="Rhea" id="RHEA:22508"/>
        <dbReference type="Rhea" id="RHEA-COMP:17339"/>
        <dbReference type="Rhea" id="RHEA-COMP:17340"/>
        <dbReference type="ChEBI" id="CHEBI:33019"/>
        <dbReference type="ChEBI" id="CHEBI:61560"/>
        <dbReference type="ChEBI" id="CHEBI:173112"/>
        <dbReference type="EC" id="2.7.7.49"/>
    </reaction>
</comment>
<comment type="catalytic activity">
    <reaction evidence="12">
        <text>DNA(n) + a 2'-deoxyribonucleoside 5'-triphosphate = DNA(n+1) + diphosphate</text>
        <dbReference type="Rhea" id="RHEA:22508"/>
        <dbReference type="Rhea" id="RHEA-COMP:17339"/>
        <dbReference type="Rhea" id="RHEA-COMP:17340"/>
        <dbReference type="ChEBI" id="CHEBI:33019"/>
        <dbReference type="ChEBI" id="CHEBI:61560"/>
        <dbReference type="ChEBI" id="CHEBI:173112"/>
        <dbReference type="EC" id="2.7.7.7"/>
    </reaction>
</comment>
<comment type="cofactor">
    <cofactor evidence="1">
        <name>Mg(2+)</name>
        <dbReference type="ChEBI" id="CHEBI:18420"/>
    </cofactor>
    <text evidence="1">Binds 2 magnesium ions for reverse transcriptase polymerase activity.</text>
</comment>
<comment type="cofactor">
    <cofactor evidence="1">
        <name>Mg(2+)</name>
        <dbReference type="ChEBI" id="CHEBI:18420"/>
    </cofactor>
    <text evidence="1">Binds 2 magnesium ions for ribonuclease H (RNase H) activity. Substrate-binding is a precondition for magnesium binding.</text>
</comment>
<comment type="cofactor">
    <cofactor evidence="1">
        <name>Mg(2+)</name>
        <dbReference type="ChEBI" id="CHEBI:18420"/>
    </cofactor>
    <text evidence="1">Magnesium ions are required for integrase activity. Binds at least 1, maybe 2 magnesium ions.</text>
</comment>
<comment type="activity regulation">
    <text evidence="1">Protease: The viral protease is inhibited by many synthetic protease inhibitors (PIs), such as amprenavir, atazanavir, indinavir, loprinavir, nelfinavir, ritonavir and saquinavir. Use of protease inhibitors in tritherapy regimens permit more ambitious therapeutic strategies. Reverse transcriptase/ribonuclease H: RT can be inhibited either by nucleoside RT inhibitors (NRTIs) or by non nucleoside RT inhibitors (NNRTIs). NRTIs act as chain terminators, whereas NNRTIs inhibit DNA polymerization by binding a small hydrophobic pocket near the RT active site and inducing an allosteric change in this region. Classical NRTIs are abacavir, adefovir (PMEA), didanosine (ddI), lamivudine (3TC), stavudine (d4T), tenofovir (PMPA), zalcitabine (ddC), and zidovudine (AZT). Classical NNRTIs are atevirdine (BHAP U-87201E), delavirdine, efavirenz (DMP-266), emivirine (I-EBU), and nevirapine (BI-RG-587). The tritherapies used as a basic effective treatment of AIDS associate two NRTIs and one NNRTI.</text>
</comment>
<comment type="subunit">
    <molecule>Matrix protein p17</molecule>
    <text evidence="6 7">Homotrimer; further assembles as hexamers of trimers. Interacts with gp41 (via C-terminus). Interacts with host CALM1; this interaction induces a conformational change in the Matrix protein, triggering exposure of the myristate group. Interacts with host AP3D1; this interaction allows the polyprotein trafficking to multivesicular bodies during virus assembly. Part of the pre-integration complex (PIC) which is composed of viral genome, matrix protein, Vpr and integrase.</text>
</comment>
<comment type="subunit">
    <molecule>Capsid protein p24</molecule>
    <text evidence="2 6 7">Homodimer; the homodimer further multimerizes as homohexamers or homopentamers. Interacts with human PPIA/CYPA. Interacts with human NUP153. Interacts with host PDZD8; this interaction stabilizes the capsid. Interacts with monkey TRIM5; this interaction destabilizes the capsid.</text>
</comment>
<comment type="subunit">
    <molecule>Protease</molecule>
    <text evidence="5 8">Homodimer, whose active site consists of two apposed aspartic acid residues.</text>
</comment>
<comment type="subunit">
    <molecule>Reverse transcriptase/ribonuclease H</molecule>
    <text evidence="3">Heterodimer of p66 RT and p51 RT (RT p66/p51) (By similarity). Heterodimerization of RT is essential for DNA polymerase activity (By similarity). The overall folding of the subdomains is similar in p66 RT and p51 RT but the spatial arrangements of the subdomains are dramatically different (By similarity).</text>
</comment>
<comment type="subunit">
    <molecule>Integrase</molecule>
    <text evidence="4 5 8">Homotetramer; may further associate as a homohexadecamer (By similarity). Part of the pre-integration complex (PIC) which is composed of viral genome, matrix protein, Vpr and integrase. Interacts with human SMARCB1/INI1 and human PSIP1/LEDGF isoform 1. Interacts with human KPNA3; this interaction might play a role in nuclear import of the pre-integration complex (By similarity). Interacts with human NUP153; this interaction might play a role in nuclear import of the pre-integration complex (By similarity).</text>
</comment>
<comment type="subcellular location">
    <molecule>Gag-Pol polyprotein</molecule>
    <subcellularLocation>
        <location>Host cell membrane</location>
        <topology>Lipid-anchor</topology>
    </subcellularLocation>
    <subcellularLocation>
        <location>Host endosome</location>
        <location>Host multivesicular body</location>
    </subcellularLocation>
    <text evidence="8">These locations are linked to virus assembly sites. The main location is the cell membrane, but under some circumstances, late endosomal compartments can serve as productive sites for virion assembly.</text>
</comment>
<comment type="subcellular location">
    <molecule>Matrix protein p17</molecule>
    <subcellularLocation>
        <location>Virion membrane</location>
        <topology evidence="19">Lipid-anchor</topology>
    </subcellularLocation>
    <subcellularLocation>
        <location evidence="1">Host nucleus</location>
    </subcellularLocation>
    <subcellularLocation>
        <location evidence="1">Host cytoplasm</location>
    </subcellularLocation>
</comment>
<comment type="subcellular location">
    <molecule>Capsid protein p24</molecule>
    <subcellularLocation>
        <location evidence="19">Virion</location>
    </subcellularLocation>
</comment>
<comment type="subcellular location">
    <molecule>Nucleocapsid protein p7</molecule>
    <subcellularLocation>
        <location evidence="19">Virion</location>
    </subcellularLocation>
</comment>
<comment type="subcellular location">
    <molecule>Reverse transcriptase/ribonuclease H</molecule>
    <subcellularLocation>
        <location evidence="19">Virion</location>
    </subcellularLocation>
</comment>
<comment type="subcellular location">
    <molecule>Integrase</molecule>
    <subcellularLocation>
        <location evidence="19">Virion</location>
    </subcellularLocation>
    <subcellularLocation>
        <location evidence="19">Host nucleus</location>
    </subcellularLocation>
    <subcellularLocation>
        <location evidence="19">Host cytoplasm</location>
    </subcellularLocation>
    <text evidence="19">Nuclear at initial phase, cytoplasmic at assembly.</text>
</comment>
<comment type="alternative products">
    <event type="ribosomal frameshifting"/>
    <isoform>
        <id>P24107-1</id>
        <name>Gag-Pol polyprotein</name>
        <sequence type="displayed"/>
    </isoform>
    <isoform>
        <id>P24106-1</id>
        <name>Gag polyprotein</name>
        <sequence type="external"/>
    </isoform>
    <text>Translation results in the formation of the Gag polyprotein most of the time. Ribosomal frameshifting at the gag-pol genes boundary occurs at low frequency and produces the Gag-Pol polyprotein. This strategy of translation probably allows the virus to modulate the quantity of each viral protein. Maintenance of a correct Gag to Gag-Pol ratio is essential for RNA dimerization and viral infectivity.</text>
</comment>
<comment type="domain">
    <molecule>Reverse transcriptase/ribonuclease H</molecule>
    <text evidence="1">RT is structured in five subdomains: finger, palm, thumb, connection and RNase H. Within the palm subdomain, the 'primer grip' region is thought to be involved in the positioning of the primer terminus for accommodating the incoming nucleotide. The RNase H domain stabilizes the association of RT with primer-template.</text>
</comment>
<comment type="domain">
    <molecule>Reverse transcriptase/ribonuclease H</molecule>
    <text evidence="1">The tryptophan repeat motif is involved in RT p66/p51 dimerization (By similarity).</text>
</comment>
<comment type="domain">
    <molecule>Integrase</molecule>
    <text evidence="1">The core domain contains the D-x(n)-D-x(35)-E motif, named for the phylogenetically conserved glutamic acid and aspartic acid residues and the invariant 35 amino acid spacing between the second and third acidic residues. Each acidic residue of the D,D(35)E motif is independently essential for the 3'-processing and strand transfer activities of purified integrase protein.</text>
</comment>
<comment type="PTM">
    <molecule>Gag-Pol polyprotein</molecule>
    <text evidence="5 12">Specific enzymatic cleavages by the viral protease yield mature proteins. The protease is released by autocatalytic cleavage. The polyprotein is cleaved during and after budding, this process is termed maturation. Proteolytic cleavage of p66 RT removes the RNase H domain to yield the p51 RT subunit. Nucleocapsid protein p7 might be further cleaved after virus entry.</text>
</comment>
<comment type="miscellaneous">
    <molecule>Reverse transcriptase/ribonuclease H</molecule>
    <text evidence="1">Error-prone enzyme that lacks a proof-reading function. High mutations rate is a direct consequence of this characteristic. RT also displays frequent template switching leading to high recombination rate. Recombination mostly occurs between homologous regions of the two copackaged RNA genomes. If these two RNA molecules derive from different viral strains, reverse transcription will give rise to highly recombinated proviral DNAs.</text>
</comment>
<comment type="miscellaneous">
    <text>Readthrough of a terminator codon TGA may occur between the codons for Ile-992 and Gly-993.</text>
</comment>
<comment type="miscellaneous">
    <molecule>Isoform Gag-Pol polyprotein</molecule>
    <text>Produced by -1 ribosomal frameshifting.</text>
</comment>
<evidence type="ECO:0000250" key="1"/>
<evidence type="ECO:0000250" key="2">
    <source>
        <dbReference type="UniProtKB" id="P03348"/>
    </source>
</evidence>
<evidence type="ECO:0000250" key="3">
    <source>
        <dbReference type="UniProtKB" id="P03366"/>
    </source>
</evidence>
<evidence type="ECO:0000250" key="4">
    <source>
        <dbReference type="UniProtKB" id="P03367"/>
    </source>
</evidence>
<evidence type="ECO:0000250" key="5">
    <source>
        <dbReference type="UniProtKB" id="P04585"/>
    </source>
</evidence>
<evidence type="ECO:0000250" key="6">
    <source>
        <dbReference type="UniProtKB" id="P04591"/>
    </source>
</evidence>
<evidence type="ECO:0000250" key="7">
    <source>
        <dbReference type="UniProtKB" id="P12493"/>
    </source>
</evidence>
<evidence type="ECO:0000250" key="8">
    <source>
        <dbReference type="UniProtKB" id="P12497"/>
    </source>
</evidence>
<evidence type="ECO:0000255" key="9"/>
<evidence type="ECO:0000255" key="10">
    <source>
        <dbReference type="PROSITE-ProRule" id="PRU00047"/>
    </source>
</evidence>
<evidence type="ECO:0000255" key="11">
    <source>
        <dbReference type="PROSITE-ProRule" id="PRU00275"/>
    </source>
</evidence>
<evidence type="ECO:0000255" key="12">
    <source>
        <dbReference type="PROSITE-ProRule" id="PRU00405"/>
    </source>
</evidence>
<evidence type="ECO:0000255" key="13">
    <source>
        <dbReference type="PROSITE-ProRule" id="PRU00408"/>
    </source>
</evidence>
<evidence type="ECO:0000255" key="14">
    <source>
        <dbReference type="PROSITE-ProRule" id="PRU00450"/>
    </source>
</evidence>
<evidence type="ECO:0000255" key="15">
    <source>
        <dbReference type="PROSITE-ProRule" id="PRU00457"/>
    </source>
</evidence>
<evidence type="ECO:0000255" key="16">
    <source>
        <dbReference type="PROSITE-ProRule" id="PRU00506"/>
    </source>
</evidence>
<evidence type="ECO:0000255" key="17">
    <source>
        <dbReference type="PROSITE-ProRule" id="PRU10094"/>
    </source>
</evidence>
<evidence type="ECO:0000256" key="18">
    <source>
        <dbReference type="SAM" id="MobiDB-lite"/>
    </source>
</evidence>
<evidence type="ECO:0000305" key="19"/>
<accession>P24107</accession>
<accession>O73194</accession>
<reference key="1">
    <citation type="journal article" date="1991" name="J. Gen. Virol.">
        <title>Nucleotide sequence of a Guinea-Bissau-derived human immunodeficiency virus type 2 proviral clone (HIV-2CAM2).</title>
        <authorList>
            <person name="Tristem M."/>
            <person name="Hill F."/>
            <person name="Karpas A."/>
        </authorList>
    </citation>
    <scope>NUCLEOTIDE SEQUENCE [GENOMIC DNA]</scope>
</reference>
<reference key="2">
    <citation type="journal article" date="1996" name="Curr. Top. Microbiol. Immunol.">
        <title>Proteolytic processing and particle maturation.</title>
        <authorList>
            <person name="Vogt V.M."/>
        </authorList>
    </citation>
    <scope>REVIEW</scope>
</reference>
<reference key="3">
    <citation type="journal article" date="1999" name="J. Mol. Biol.">
        <title>Structural biology of HIV.</title>
        <authorList>
            <person name="Turner B.G."/>
            <person name="Summers M.F."/>
        </authorList>
    </citation>
    <scope>REVIEW</scope>
</reference>
<reference key="4">
    <citation type="journal article" date="2001" name="Annu. Rev. Genet.">
        <title>Mechanisms of retroviral recombination.</title>
        <authorList>
            <person name="Negroni M."/>
            <person name="Buc H."/>
        </authorList>
    </citation>
    <scope>REVIEW</scope>
</reference>
<reference key="5">
    <citation type="journal article" date="2002" name="Genome Biol.">
        <title>Retroviral proteases.</title>
        <authorList>
            <person name="Dunn B.M."/>
            <person name="Goodenow M.M."/>
            <person name="Gustchina A."/>
            <person name="Wlodawer A."/>
        </authorList>
    </citation>
    <scope>REVIEW</scope>
</reference>